<reference evidence="5" key="1">
    <citation type="journal article" date="2009" name="BMC Evol. Biol.">
        <title>A proteomic approach for studying insect phylogeny: CAPA peptides of ancient insect taxa (Dictyoptera, Blattoptera) as a test case.</title>
        <authorList>
            <person name="Roth S."/>
            <person name="Fromm B."/>
            <person name="Gaede G."/>
            <person name="Predel R."/>
        </authorList>
    </citation>
    <scope>PROTEIN SEQUENCE</scope>
    <scope>PYROGLUTAMATE FORMATION AT GLN-1</scope>
    <scope>AMIDATION AT TRP-8</scope>
    <source>
        <tissue evidence="3">Corpora cardiaca</tissue>
    </source>
</reference>
<name>HTF_PERFU</name>
<organism>
    <name type="scientific">Periplaneta fuliginosa</name>
    <name type="common">Smokybrown cockroach</name>
    <name type="synonym">Dusky-brown cockroach</name>
    <dbReference type="NCBI Taxonomy" id="36977"/>
    <lineage>
        <taxon>Eukaryota</taxon>
        <taxon>Metazoa</taxon>
        <taxon>Ecdysozoa</taxon>
        <taxon>Arthropoda</taxon>
        <taxon>Hexapoda</taxon>
        <taxon>Insecta</taxon>
        <taxon>Pterygota</taxon>
        <taxon>Neoptera</taxon>
        <taxon>Polyneoptera</taxon>
        <taxon>Dictyoptera</taxon>
        <taxon>Blattodea</taxon>
        <taxon>Blattoidea</taxon>
        <taxon>Blattidae</taxon>
        <taxon>Blattinae</taxon>
        <taxon>Periplaneta</taxon>
    </lineage>
</organism>
<sequence length="8" mass="991">QVNFSPNW</sequence>
<comment type="function">
    <text evidence="5">Hypertrehalosaemic factors are neuropeptides that elevate the level of trehalose in the hemolymph (trehalose is the major carbohydrate in the hemolymph of insects).</text>
</comment>
<comment type="subcellular location">
    <subcellularLocation>
        <location evidence="5">Secreted</location>
    </subcellularLocation>
</comment>
<comment type="similarity">
    <text evidence="2">Belongs to the AKH/HRTH/RPCH family.</text>
</comment>
<accession>P85715</accession>
<protein>
    <recommendedName>
        <fullName evidence="1">Hypertrehalosaemic factor</fullName>
    </recommendedName>
    <alternativeName>
        <fullName evidence="4">Adipokinetic hormone 1</fullName>
        <shortName evidence="4">PerFu-AKH-1</shortName>
    </alternativeName>
    <alternativeName>
        <fullName evidence="1">Hypertrehalosaemic neuropeptide</fullName>
    </alternativeName>
</protein>
<keyword id="KW-0027">Amidation</keyword>
<keyword id="KW-0903">Direct protein sequencing</keyword>
<keyword id="KW-0372">Hormone</keyword>
<keyword id="KW-0527">Neuropeptide</keyword>
<keyword id="KW-0873">Pyrrolidone carboxylic acid</keyword>
<keyword id="KW-0964">Secreted</keyword>
<dbReference type="GO" id="GO:0005576">
    <property type="term" value="C:extracellular region"/>
    <property type="evidence" value="ECO:0007669"/>
    <property type="project" value="UniProtKB-SubCell"/>
</dbReference>
<dbReference type="GO" id="GO:0005179">
    <property type="term" value="F:hormone activity"/>
    <property type="evidence" value="ECO:0007669"/>
    <property type="project" value="UniProtKB-KW"/>
</dbReference>
<dbReference type="GO" id="GO:0007218">
    <property type="term" value="P:neuropeptide signaling pathway"/>
    <property type="evidence" value="ECO:0007669"/>
    <property type="project" value="UniProtKB-KW"/>
</dbReference>
<dbReference type="InterPro" id="IPR002047">
    <property type="entry name" value="Adipokinetic_hormone_CS"/>
</dbReference>
<dbReference type="PROSITE" id="PS00256">
    <property type="entry name" value="AKH"/>
    <property type="match status" value="1"/>
</dbReference>
<evidence type="ECO:0000250" key="1">
    <source>
        <dbReference type="UniProtKB" id="P67790"/>
    </source>
</evidence>
<evidence type="ECO:0000255" key="2"/>
<evidence type="ECO:0000269" key="3">
    <source>
    </source>
</evidence>
<evidence type="ECO:0000303" key="4">
    <source>
    </source>
</evidence>
<evidence type="ECO:0000305" key="5"/>
<proteinExistence type="evidence at protein level"/>
<feature type="peptide" id="PRO_0000378664" description="Hypertrehalosaemic factor" evidence="3">
    <location>
        <begin position="1"/>
        <end position="8"/>
    </location>
</feature>
<feature type="modified residue" description="Pyrrolidone carboxylic acid" evidence="3">
    <location>
        <position position="1"/>
    </location>
</feature>
<feature type="modified residue" description="Tryptophan amide" evidence="3">
    <location>
        <position position="8"/>
    </location>
</feature>